<evidence type="ECO:0000255" key="1">
    <source>
        <dbReference type="HAMAP-Rule" id="MF_00230"/>
    </source>
</evidence>
<feature type="chain" id="PRO_1000021587" description="Nicotinate-nucleotide--dimethylbenzimidazole phosphoribosyltransferase">
    <location>
        <begin position="1"/>
        <end position="358"/>
    </location>
</feature>
<feature type="active site" description="Proton acceptor" evidence="1">
    <location>
        <position position="313"/>
    </location>
</feature>
<accession>A4QFR5</accession>
<sequence>MVPAELFARVEFPDHKILAQTKDFHDSLTKPPGSLGKLEQIGCFISACQGQIPPRPLNNSKIVVFAGDHGVATKGVSAYPSSVSLQMAENITNGGAAINVIARTTGTSVRLIDTSLDHEAWGDERVSRSCGSIDVEDAMTQEQVERALEIGKRIADQEVDAGADILIPGDLGIGNTTTAAALVGTFTLAEPVVVVGRGTGIDDEAWKLKVSAIRDAMFRVRDLRQDPIAIARKISSPDLAAMAAFIAQAAVRRTPVLLDGVVVTAAALLANKLAPGARRWFIAGHRSTEPAHSVALDALALDPILEFGMYLGEGSGAATALPMVKIAVDLMNDMSTFSSAGVDGPLNASSEAPEQNTE</sequence>
<reference key="1">
    <citation type="journal article" date="2007" name="Microbiology">
        <title>Comparative analysis of the Corynebacterium glutamicum group and complete genome sequence of strain R.</title>
        <authorList>
            <person name="Yukawa H."/>
            <person name="Omumasaba C.A."/>
            <person name="Nonaka H."/>
            <person name="Kos P."/>
            <person name="Okai N."/>
            <person name="Suzuki N."/>
            <person name="Suda M."/>
            <person name="Tsuge Y."/>
            <person name="Watanabe J."/>
            <person name="Ikeda Y."/>
            <person name="Vertes A.A."/>
            <person name="Inui M."/>
        </authorList>
    </citation>
    <scope>NUCLEOTIDE SEQUENCE [LARGE SCALE GENOMIC DNA]</scope>
    <source>
        <strain>R</strain>
    </source>
</reference>
<protein>
    <recommendedName>
        <fullName evidence="1">Nicotinate-nucleotide--dimethylbenzimidazole phosphoribosyltransferase</fullName>
        <shortName evidence="1">NN:DBI PRT</shortName>
        <ecNumber evidence="1">2.4.2.21</ecNumber>
    </recommendedName>
    <alternativeName>
        <fullName evidence="1">N(1)-alpha-phosphoribosyltransferase</fullName>
    </alternativeName>
</protein>
<keyword id="KW-0169">Cobalamin biosynthesis</keyword>
<keyword id="KW-0328">Glycosyltransferase</keyword>
<keyword id="KW-0808">Transferase</keyword>
<organism>
    <name type="scientific">Corynebacterium glutamicum (strain R)</name>
    <dbReference type="NCBI Taxonomy" id="340322"/>
    <lineage>
        <taxon>Bacteria</taxon>
        <taxon>Bacillati</taxon>
        <taxon>Actinomycetota</taxon>
        <taxon>Actinomycetes</taxon>
        <taxon>Mycobacteriales</taxon>
        <taxon>Corynebacteriaceae</taxon>
        <taxon>Corynebacterium</taxon>
    </lineage>
</organism>
<proteinExistence type="inferred from homology"/>
<comment type="function">
    <text evidence="1">Catalyzes the synthesis of alpha-ribazole-5'-phosphate from nicotinate mononucleotide (NAMN) and 5,6-dimethylbenzimidazole (DMB).</text>
</comment>
<comment type="catalytic activity">
    <reaction evidence="1">
        <text>5,6-dimethylbenzimidazole + nicotinate beta-D-ribonucleotide = alpha-ribazole 5'-phosphate + nicotinate + H(+)</text>
        <dbReference type="Rhea" id="RHEA:11196"/>
        <dbReference type="ChEBI" id="CHEBI:15378"/>
        <dbReference type="ChEBI" id="CHEBI:15890"/>
        <dbReference type="ChEBI" id="CHEBI:32544"/>
        <dbReference type="ChEBI" id="CHEBI:57502"/>
        <dbReference type="ChEBI" id="CHEBI:57918"/>
        <dbReference type="EC" id="2.4.2.21"/>
    </reaction>
</comment>
<comment type="pathway">
    <text evidence="1">Nucleoside biosynthesis; alpha-ribazole biosynthesis; alpha-ribazole from 5,6-dimethylbenzimidazole: step 1/2.</text>
</comment>
<comment type="similarity">
    <text evidence="1">Belongs to the CobT family.</text>
</comment>
<name>COBT_CORGB</name>
<gene>
    <name evidence="1" type="primary">cobT</name>
    <name type="ordered locus">cgR_2081</name>
</gene>
<dbReference type="EC" id="2.4.2.21" evidence="1"/>
<dbReference type="EMBL" id="AP009044">
    <property type="protein sequence ID" value="BAF55081.1"/>
    <property type="molecule type" value="Genomic_DNA"/>
</dbReference>
<dbReference type="RefSeq" id="WP_011897589.1">
    <property type="nucleotide sequence ID" value="NC_009342.1"/>
</dbReference>
<dbReference type="SMR" id="A4QFR5"/>
<dbReference type="KEGG" id="cgt:cgR_2081"/>
<dbReference type="HOGENOM" id="CLU_002982_0_2_11"/>
<dbReference type="PhylomeDB" id="A4QFR5"/>
<dbReference type="UniPathway" id="UPA00061">
    <property type="reaction ID" value="UER00516"/>
</dbReference>
<dbReference type="Proteomes" id="UP000006698">
    <property type="component" value="Chromosome"/>
</dbReference>
<dbReference type="GO" id="GO:0008939">
    <property type="term" value="F:nicotinate-nucleotide-dimethylbenzimidazole phosphoribosyltransferase activity"/>
    <property type="evidence" value="ECO:0007669"/>
    <property type="project" value="UniProtKB-UniRule"/>
</dbReference>
<dbReference type="GO" id="GO:0009236">
    <property type="term" value="P:cobalamin biosynthetic process"/>
    <property type="evidence" value="ECO:0007669"/>
    <property type="project" value="UniProtKB-KW"/>
</dbReference>
<dbReference type="CDD" id="cd02439">
    <property type="entry name" value="DMB-PRT_CobT"/>
    <property type="match status" value="1"/>
</dbReference>
<dbReference type="Gene3D" id="1.10.1610.10">
    <property type="match status" value="1"/>
</dbReference>
<dbReference type="Gene3D" id="3.40.50.10210">
    <property type="match status" value="1"/>
</dbReference>
<dbReference type="HAMAP" id="MF_00230">
    <property type="entry name" value="CobT"/>
    <property type="match status" value="1"/>
</dbReference>
<dbReference type="InterPro" id="IPR003200">
    <property type="entry name" value="Nict_dMeBzImd_PRibTrfase"/>
</dbReference>
<dbReference type="InterPro" id="IPR017846">
    <property type="entry name" value="Nict_dMeBzImd_PRibTrfase_bact"/>
</dbReference>
<dbReference type="InterPro" id="IPR023195">
    <property type="entry name" value="Nict_dMeBzImd_PRibTrfase_N"/>
</dbReference>
<dbReference type="InterPro" id="IPR036087">
    <property type="entry name" value="Nict_dMeBzImd_PRibTrfase_sf"/>
</dbReference>
<dbReference type="NCBIfam" id="TIGR03160">
    <property type="entry name" value="cobT_DBIPRT"/>
    <property type="match status" value="1"/>
</dbReference>
<dbReference type="NCBIfam" id="NF000996">
    <property type="entry name" value="PRK00105.1"/>
    <property type="match status" value="1"/>
</dbReference>
<dbReference type="PANTHER" id="PTHR43463">
    <property type="entry name" value="NICOTINATE-NUCLEOTIDE--DIMETHYLBENZIMIDAZOLE PHOSPHORIBOSYLTRANSFERASE"/>
    <property type="match status" value="1"/>
</dbReference>
<dbReference type="PANTHER" id="PTHR43463:SF1">
    <property type="entry name" value="NICOTINATE-NUCLEOTIDE--DIMETHYLBENZIMIDAZOLE PHOSPHORIBOSYLTRANSFERASE"/>
    <property type="match status" value="1"/>
</dbReference>
<dbReference type="Pfam" id="PF02277">
    <property type="entry name" value="DBI_PRT"/>
    <property type="match status" value="1"/>
</dbReference>
<dbReference type="SUPFAM" id="SSF52733">
    <property type="entry name" value="Nicotinate mononucleotide:5,6-dimethylbenzimidazole phosphoribosyltransferase (CobT)"/>
    <property type="match status" value="1"/>
</dbReference>